<gene>
    <name evidence="1" type="primary">ureD3</name>
    <name type="ordered locus">BBta_7013</name>
</gene>
<dbReference type="EMBL" id="CP000494">
    <property type="protein sequence ID" value="ABQ38898.1"/>
    <property type="molecule type" value="Genomic_DNA"/>
</dbReference>
<dbReference type="RefSeq" id="WP_012046828.1">
    <property type="nucleotide sequence ID" value="NC_009485.1"/>
</dbReference>
<dbReference type="SMR" id="A5ERV4"/>
<dbReference type="STRING" id="288000.BBta_7013"/>
<dbReference type="KEGG" id="bbt:BBta_7013"/>
<dbReference type="eggNOG" id="COG0829">
    <property type="taxonomic scope" value="Bacteria"/>
</dbReference>
<dbReference type="HOGENOM" id="CLU_056339_2_0_5"/>
<dbReference type="OrthoDB" id="9798842at2"/>
<dbReference type="Proteomes" id="UP000000246">
    <property type="component" value="Chromosome"/>
</dbReference>
<dbReference type="GO" id="GO:0005737">
    <property type="term" value="C:cytoplasm"/>
    <property type="evidence" value="ECO:0007669"/>
    <property type="project" value="UniProtKB-SubCell"/>
</dbReference>
<dbReference type="GO" id="GO:0016151">
    <property type="term" value="F:nickel cation binding"/>
    <property type="evidence" value="ECO:0007669"/>
    <property type="project" value="UniProtKB-UniRule"/>
</dbReference>
<dbReference type="HAMAP" id="MF_01384">
    <property type="entry name" value="UreD"/>
    <property type="match status" value="1"/>
</dbReference>
<dbReference type="InterPro" id="IPR002669">
    <property type="entry name" value="UreD"/>
</dbReference>
<dbReference type="PANTHER" id="PTHR33643">
    <property type="entry name" value="UREASE ACCESSORY PROTEIN D"/>
    <property type="match status" value="1"/>
</dbReference>
<dbReference type="PANTHER" id="PTHR33643:SF1">
    <property type="entry name" value="UREASE ACCESSORY PROTEIN D"/>
    <property type="match status" value="1"/>
</dbReference>
<dbReference type="Pfam" id="PF01774">
    <property type="entry name" value="UreD"/>
    <property type="match status" value="1"/>
</dbReference>
<protein>
    <recommendedName>
        <fullName evidence="1">Urease accessory protein UreD 3</fullName>
    </recommendedName>
</protein>
<reference key="1">
    <citation type="journal article" date="2007" name="Science">
        <title>Legumes symbioses: absence of nod genes in photosynthetic bradyrhizobia.</title>
        <authorList>
            <person name="Giraud E."/>
            <person name="Moulin L."/>
            <person name="Vallenet D."/>
            <person name="Barbe V."/>
            <person name="Cytryn E."/>
            <person name="Avarre J.-C."/>
            <person name="Jaubert M."/>
            <person name="Simon D."/>
            <person name="Cartieaux F."/>
            <person name="Prin Y."/>
            <person name="Bena G."/>
            <person name="Hannibal L."/>
            <person name="Fardoux J."/>
            <person name="Kojadinovic M."/>
            <person name="Vuillet L."/>
            <person name="Lajus A."/>
            <person name="Cruveiller S."/>
            <person name="Rouy Z."/>
            <person name="Mangenot S."/>
            <person name="Segurens B."/>
            <person name="Dossat C."/>
            <person name="Franck W.L."/>
            <person name="Chang W.-S."/>
            <person name="Saunders E."/>
            <person name="Bruce D."/>
            <person name="Richardson P."/>
            <person name="Normand P."/>
            <person name="Dreyfus B."/>
            <person name="Pignol D."/>
            <person name="Stacey G."/>
            <person name="Emerich D."/>
            <person name="Vermeglio A."/>
            <person name="Medigue C."/>
            <person name="Sadowsky M."/>
        </authorList>
    </citation>
    <scope>NUCLEOTIDE SEQUENCE [LARGE SCALE GENOMIC DNA]</scope>
    <source>
        <strain>BTAi1 / ATCC BAA-1182</strain>
    </source>
</reference>
<name>URED3_BRASB</name>
<accession>A5ERV4</accession>
<keyword id="KW-0143">Chaperone</keyword>
<keyword id="KW-0963">Cytoplasm</keyword>
<keyword id="KW-0996">Nickel insertion</keyword>
<keyword id="KW-1185">Reference proteome</keyword>
<evidence type="ECO:0000255" key="1">
    <source>
        <dbReference type="HAMAP-Rule" id="MF_01384"/>
    </source>
</evidence>
<comment type="function">
    <text evidence="1">Required for maturation of urease via the functional incorporation of the urease nickel metallocenter.</text>
</comment>
<comment type="subunit">
    <text evidence="1">UreD, UreF and UreG form a complex that acts as a GTP-hydrolysis-dependent molecular chaperone, activating the urease apoprotein by helping to assemble the nickel containing metallocenter of UreC. The UreE protein probably delivers the nickel.</text>
</comment>
<comment type="subcellular location">
    <subcellularLocation>
        <location evidence="1">Cytoplasm</location>
    </subcellularLocation>
</comment>
<comment type="similarity">
    <text evidence="1">Belongs to the UreD family.</text>
</comment>
<sequence length="278" mass="29636">MRADPASAAADIFEANRARGAVRFDVRLQDGMTRRHHLHESGSLRVRFPSPEDDGLSAMFVNTAGGIAGGDRFAVEVAAGEGSRVTLSSAAAEKVYRAPGKPAELDIALTAAAGAHIAWLPQETILFDRARIHRRIDIDLAATASLLLCEIVVFGRTAMGERMREGEFVDRWRLRRGGRLVFAETVRLDGDIGGKLAHPAIANGAAAIGTALIVPGDAALVERIRESLPAFRGEAGLSAWNGFAMARFCAQDAASLRADMMAVLGCASAVPLPRLWLN</sequence>
<proteinExistence type="inferred from homology"/>
<organism>
    <name type="scientific">Bradyrhizobium sp. (strain BTAi1 / ATCC BAA-1182)</name>
    <dbReference type="NCBI Taxonomy" id="288000"/>
    <lineage>
        <taxon>Bacteria</taxon>
        <taxon>Pseudomonadati</taxon>
        <taxon>Pseudomonadota</taxon>
        <taxon>Alphaproteobacteria</taxon>
        <taxon>Hyphomicrobiales</taxon>
        <taxon>Nitrobacteraceae</taxon>
        <taxon>Bradyrhizobium</taxon>
    </lineage>
</organism>
<feature type="chain" id="PRO_0000340415" description="Urease accessory protein UreD 3">
    <location>
        <begin position="1"/>
        <end position="278"/>
    </location>
</feature>